<comment type="function">
    <text evidence="2">Component of the origin recognition complex (ORC) that binds origins of replication. DNA-binding is ATP-dependent. The specific DNA sequences that define origins of replication have not been identified yet.</text>
</comment>
<comment type="subunit">
    <text evidence="1">Component of the origin recognition complex (ORC) composed of at least ORC1, ORC2, ORC3, ORC4, ORC5 and ORC6. ORC is regulated in a cell-cycle and development dependent manner. It is sequentially assembled at the exit from anaphase of mitosis and disassembled as cells enter S phase.</text>
</comment>
<comment type="subcellular location">
    <subcellularLocation>
        <location evidence="2">Nucleus</location>
    </subcellularLocation>
</comment>
<comment type="tissue specificity">
    <text evidence="5">Expressed at low levels in the shoot apical meristem (SAM), leaves, ears and roots (including root tips).</text>
</comment>
<comment type="induction">
    <text evidence="5">Reduced expression upon sucrose depletion-mediated cell proliferation arrest, and accumulates after sucrose treatment.</text>
</comment>
<comment type="similarity">
    <text evidence="8">Belongs to the ORC3 family.</text>
</comment>
<comment type="sequence caution" evidence="8">
    <conflict type="erroneous gene model prediction">
        <sequence resource="EMBL-CDS" id="AAM74272"/>
    </conflict>
</comment>
<comment type="sequence caution" evidence="8">
    <conflict type="erroneous gene model prediction">
        <sequence resource="EMBL-CDS" id="ABB47555"/>
    </conflict>
</comment>
<comment type="sequence caution" evidence="8">
    <conflict type="erroneous gene model prediction">
        <sequence resource="EMBL-CDS" id="EEE50922"/>
    </conflict>
</comment>
<name>ORC3_ORYSJ</name>
<organism evidence="11">
    <name type="scientific">Oryza sativa subsp. japonica</name>
    <name type="common">Rice</name>
    <dbReference type="NCBI Taxonomy" id="39947"/>
    <lineage>
        <taxon>Eukaryota</taxon>
        <taxon>Viridiplantae</taxon>
        <taxon>Streptophyta</taxon>
        <taxon>Embryophyta</taxon>
        <taxon>Tracheophyta</taxon>
        <taxon>Spermatophyta</taxon>
        <taxon>Magnoliopsida</taxon>
        <taxon>Liliopsida</taxon>
        <taxon>Poales</taxon>
        <taxon>Poaceae</taxon>
        <taxon>BOP clade</taxon>
        <taxon>Oryzoideae</taxon>
        <taxon>Oryzeae</taxon>
        <taxon>Oryzinae</taxon>
        <taxon>Oryza</taxon>
        <taxon>Oryza sativa</taxon>
    </lineage>
</organism>
<feature type="chain" id="PRO_0000431432" description="Origin of replication complex subunit 3">
    <location>
        <begin position="1"/>
        <end position="718"/>
    </location>
</feature>
<feature type="region of interest" description="Disordered" evidence="4">
    <location>
        <begin position="26"/>
        <end position="75"/>
    </location>
</feature>
<feature type="short sequence motif" description="Nuclear localization signal" evidence="3">
    <location>
        <begin position="659"/>
        <end position="666"/>
    </location>
</feature>
<feature type="compositionally biased region" description="Low complexity" evidence="4">
    <location>
        <begin position="26"/>
        <end position="43"/>
    </location>
</feature>
<feature type="sequence conflict" description="In Ref. 1; BAC56110." evidence="8" ref="1">
    <original>L</original>
    <variation>V</variation>
    <location>
        <position position="177"/>
    </location>
</feature>
<feature type="sequence conflict" description="In Ref. 1; BAC56110." evidence="8" ref="1">
    <original>D</original>
    <variation>A</variation>
    <location>
        <position position="288"/>
    </location>
</feature>
<feature type="sequence conflict" description="In Ref. 1; BAC56110." evidence="8" ref="1">
    <original>V</original>
    <variation>A</variation>
    <location>
        <position position="512"/>
    </location>
</feature>
<feature type="sequence conflict" description="In Ref. 1; BAC56110." evidence="8" ref="1">
    <original>L</original>
    <variation>S</variation>
    <location>
        <position position="619"/>
    </location>
</feature>
<sequence length="718" mass="80123">MAAPPGEAPLTAATNIEPFYVLHKGGAAASSSSSSAPSLPSSGRARRRIDVSGLASPNPKPGKRSRDDDAAEDDDDDELYERLRLDAFHRVWSKIQSTINEVLRGISLKLFDQVLRWVQESFSAVRSIARPSAAEVRQPYPLLTDVICRKIPTAFVLTKNAEFVDDITTFRDLAEYLESNGCHLAKLSATELSEKNGVGCCFRSLLRQLLSDVPDVADIFALASWYSAAENYDQPIVVVIDDLEQCSGDVLGELVMMLSEWVIKIPIFFVMGIATTLDAPRKLLSSEDLQRLEPCKLTLGSPSDRMNALVEAILVKPCAGFCISHEVAVFLRNYFFKHDGTITSFISALKLACSKHFSVEPLSFLCMGMLEEDRENFWHDKFNALPQELRKYASGLPSCTREKDSTKSGDNMVDGLSELMNIQKDWSSVLLCLYEAGKHGKVQLLDIFCEAVNPDLHTQKAPNLPNEKSGTSRRFIDQVMDTIRYLPVETLFCLLEVWSIHLNGMDKITNKVKELQSTTISTDSVRITKDKWPRRSTNSTGNSTVALNDKVAMLLDDVTRKFLVSVECLPFHEIVCFKNVSILQSALIGNPRRMVQLDLVKSHKHLKCSCCRKNGIAVLASMHDTSIMCNLAQEYGDVINLHDWYISFDGIINSVHSKIKRKPHTSPSKKKSKPVAAESEAMIQARFCRAVTELQITGLLRMPSKRRPDLVQRIAFGL</sequence>
<protein>
    <recommendedName>
        <fullName evidence="6">Origin of replication complex subunit 3</fullName>
        <shortName evidence="7">OsORC3</shortName>
    </recommendedName>
</protein>
<accession>Q0IY07</accession>
<accession>A0A0P0XU99</accession>
<accession>B9G5M5</accession>
<accession>Q338H8</accession>
<accession>Q852Q8</accession>
<accession>Q8LND7</accession>
<gene>
    <name evidence="6" type="primary">ORC3</name>
    <name evidence="8" type="ordered locus">LOC_Os10g26280</name>
    <name evidence="8" type="ordered locus">Os10g0402200</name>
    <name evidence="10" type="ORF">OsJ_31450</name>
    <name evidence="9" type="ORF">OSJNBa0044A10.12</name>
</gene>
<keyword id="KW-0235">DNA replication</keyword>
<keyword id="KW-0238">DNA-binding</keyword>
<keyword id="KW-0539">Nucleus</keyword>
<keyword id="KW-1185">Reference proteome</keyword>
<proteinExistence type="evidence at transcript level"/>
<evidence type="ECO:0000250" key="1">
    <source>
        <dbReference type="UniProtKB" id="Q6E7H0"/>
    </source>
</evidence>
<evidence type="ECO:0000250" key="2">
    <source>
        <dbReference type="UniProtKB" id="Q9UBD5"/>
    </source>
</evidence>
<evidence type="ECO:0000255" key="3">
    <source>
        <dbReference type="PROSITE-ProRule" id="PRU00768"/>
    </source>
</evidence>
<evidence type="ECO:0000256" key="4">
    <source>
        <dbReference type="SAM" id="MobiDB-lite"/>
    </source>
</evidence>
<evidence type="ECO:0000269" key="5">
    <source>
    </source>
</evidence>
<evidence type="ECO:0000303" key="6">
    <source>
    </source>
</evidence>
<evidence type="ECO:0000303" key="7">
    <source>
    </source>
</evidence>
<evidence type="ECO:0000305" key="8"/>
<evidence type="ECO:0000312" key="9">
    <source>
        <dbReference type="EMBL" id="AAM74272.1"/>
    </source>
</evidence>
<evidence type="ECO:0000312" key="10">
    <source>
        <dbReference type="EMBL" id="EEE50922.1"/>
    </source>
</evidence>
<evidence type="ECO:0000312" key="11">
    <source>
        <dbReference type="Proteomes" id="UP000059680"/>
    </source>
</evidence>
<reference key="1">
    <citation type="journal article" date="2005" name="Gene">
        <title>Characterization of the origin recognition complex (ORC) from a higher plant, rice (Oryza sativa L.).</title>
        <authorList>
            <person name="Mori Y."/>
            <person name="Yamamoto T."/>
            <person name="Sakaguchi N."/>
            <person name="Ishibashi T."/>
            <person name="Furukawa T."/>
            <person name="Kadota Y."/>
            <person name="Kuchitsu K."/>
            <person name="Hashimoto J."/>
            <person name="Kimura S."/>
            <person name="Sakaguchi K."/>
        </authorList>
    </citation>
    <scope>NUCLEOTIDE SEQUENCE [MRNA]</scope>
    <scope>INDUCTION BY SUCROSE</scope>
    <scope>TISSUE SPECIFICITY</scope>
    <scope>GENE FAMILY</scope>
    <scope>NOMENCLATURE</scope>
</reference>
<reference key="2">
    <citation type="journal article" date="2003" name="Science">
        <title>In-depth view of structure, activity, and evolution of rice chromosome 10.</title>
        <authorList>
            <person name="Yu Y."/>
            <person name="Rambo T."/>
            <person name="Currie J."/>
            <person name="Saski C."/>
            <person name="Kim H.-R."/>
            <person name="Collura K."/>
            <person name="Thompson S."/>
            <person name="Simmons J."/>
            <person name="Yang T.-J."/>
            <person name="Nah G."/>
            <person name="Patel A.J."/>
            <person name="Thurmond S."/>
            <person name="Henry D."/>
            <person name="Oates R."/>
            <person name="Palmer M."/>
            <person name="Pries G."/>
            <person name="Gibson J."/>
            <person name="Anderson H."/>
            <person name="Paradkar M."/>
            <person name="Crane L."/>
            <person name="Dale J."/>
            <person name="Carver M.B."/>
            <person name="Wood T."/>
            <person name="Frisch D."/>
            <person name="Engler F."/>
            <person name="Soderlund C."/>
            <person name="Palmer L.E."/>
            <person name="Teytelman L."/>
            <person name="Nascimento L."/>
            <person name="De la Bastide M."/>
            <person name="Spiegel L."/>
            <person name="Ware D."/>
            <person name="O'Shaughnessy A."/>
            <person name="Dike S."/>
            <person name="Dedhia N."/>
            <person name="Preston R."/>
            <person name="Huang E."/>
            <person name="Ferraro K."/>
            <person name="Kuit K."/>
            <person name="Miller B."/>
            <person name="Zutavern T."/>
            <person name="Katzenberger F."/>
            <person name="Muller S."/>
            <person name="Balija V."/>
            <person name="Martienssen R.A."/>
            <person name="Stein L."/>
            <person name="Minx P."/>
            <person name="Johnson D."/>
            <person name="Cordum H."/>
            <person name="Mardis E."/>
            <person name="Cheng Z."/>
            <person name="Jiang J."/>
            <person name="Wilson R."/>
            <person name="McCombie W.R."/>
            <person name="Wing R.A."/>
            <person name="Yuan Q."/>
            <person name="Ouyang S."/>
            <person name="Liu J."/>
            <person name="Jones K.M."/>
            <person name="Gansberger K."/>
            <person name="Moffat K."/>
            <person name="Hill J."/>
            <person name="Tsitrin T."/>
            <person name="Overton L."/>
            <person name="Bera J."/>
            <person name="Kim M."/>
            <person name="Jin S."/>
            <person name="Tallon L."/>
            <person name="Ciecko A."/>
            <person name="Pai G."/>
            <person name="Van Aken S."/>
            <person name="Utterback T."/>
            <person name="Reidmuller S."/>
            <person name="Bormann J."/>
            <person name="Feldblyum T."/>
            <person name="Hsiao J."/>
            <person name="Zismann V."/>
            <person name="Blunt S."/>
            <person name="de Vazeille A.R."/>
            <person name="Shaffer T."/>
            <person name="Koo H."/>
            <person name="Suh B."/>
            <person name="Yang Q."/>
            <person name="Haas B."/>
            <person name="Peterson J."/>
            <person name="Pertea M."/>
            <person name="Volfovsky N."/>
            <person name="Wortman J."/>
            <person name="White O."/>
            <person name="Salzberg S.L."/>
            <person name="Fraser C.M."/>
            <person name="Buell C.R."/>
            <person name="Messing J."/>
            <person name="Song R."/>
            <person name="Fuks G."/>
            <person name="Llaca V."/>
            <person name="Kovchak S."/>
            <person name="Young S."/>
            <person name="Bowers J.E."/>
            <person name="Paterson A.H."/>
            <person name="Johns M.A."/>
            <person name="Mao L."/>
            <person name="Pan H."/>
            <person name="Dean R.A."/>
        </authorList>
    </citation>
    <scope>NUCLEOTIDE SEQUENCE [LARGE SCALE GENOMIC DNA]</scope>
    <source>
        <strain>cv. Nipponbare</strain>
    </source>
</reference>
<reference key="3">
    <citation type="journal article" date="2005" name="Nature">
        <title>The map-based sequence of the rice genome.</title>
        <authorList>
            <consortium name="International rice genome sequencing project (IRGSP)"/>
        </authorList>
    </citation>
    <scope>NUCLEOTIDE SEQUENCE [LARGE SCALE GENOMIC DNA]</scope>
    <source>
        <strain>cv. Nipponbare</strain>
    </source>
</reference>
<reference key="4">
    <citation type="journal article" date="2008" name="Nucleic Acids Res.">
        <title>The rice annotation project database (RAP-DB): 2008 update.</title>
        <authorList>
            <consortium name="The rice annotation project (RAP)"/>
        </authorList>
    </citation>
    <scope>GENOME REANNOTATION</scope>
    <source>
        <strain>cv. Nipponbare</strain>
    </source>
</reference>
<reference key="5">
    <citation type="journal article" date="2013" name="Rice">
        <title>Improvement of the Oryza sativa Nipponbare reference genome using next generation sequence and optical map data.</title>
        <authorList>
            <person name="Kawahara Y."/>
            <person name="de la Bastide M."/>
            <person name="Hamilton J.P."/>
            <person name="Kanamori H."/>
            <person name="McCombie W.R."/>
            <person name="Ouyang S."/>
            <person name="Schwartz D.C."/>
            <person name="Tanaka T."/>
            <person name="Wu J."/>
            <person name="Zhou S."/>
            <person name="Childs K.L."/>
            <person name="Davidson R.M."/>
            <person name="Lin H."/>
            <person name="Quesada-Ocampo L."/>
            <person name="Vaillancourt B."/>
            <person name="Sakai H."/>
            <person name="Lee S.S."/>
            <person name="Kim J."/>
            <person name="Numa H."/>
            <person name="Itoh T."/>
            <person name="Buell C.R."/>
            <person name="Matsumoto T."/>
        </authorList>
    </citation>
    <scope>GENOME REANNOTATION</scope>
    <source>
        <strain>cv. Nipponbare</strain>
    </source>
</reference>
<reference key="6">
    <citation type="journal article" date="2005" name="PLoS Biol.">
        <title>The genomes of Oryza sativa: a history of duplications.</title>
        <authorList>
            <person name="Yu J."/>
            <person name="Wang J."/>
            <person name="Lin W."/>
            <person name="Li S."/>
            <person name="Li H."/>
            <person name="Zhou J."/>
            <person name="Ni P."/>
            <person name="Dong W."/>
            <person name="Hu S."/>
            <person name="Zeng C."/>
            <person name="Zhang J."/>
            <person name="Zhang Y."/>
            <person name="Li R."/>
            <person name="Xu Z."/>
            <person name="Li S."/>
            <person name="Li X."/>
            <person name="Zheng H."/>
            <person name="Cong L."/>
            <person name="Lin L."/>
            <person name="Yin J."/>
            <person name="Geng J."/>
            <person name="Li G."/>
            <person name="Shi J."/>
            <person name="Liu J."/>
            <person name="Lv H."/>
            <person name="Li J."/>
            <person name="Wang J."/>
            <person name="Deng Y."/>
            <person name="Ran L."/>
            <person name="Shi X."/>
            <person name="Wang X."/>
            <person name="Wu Q."/>
            <person name="Li C."/>
            <person name="Ren X."/>
            <person name="Wang J."/>
            <person name="Wang X."/>
            <person name="Li D."/>
            <person name="Liu D."/>
            <person name="Zhang X."/>
            <person name="Ji Z."/>
            <person name="Zhao W."/>
            <person name="Sun Y."/>
            <person name="Zhang Z."/>
            <person name="Bao J."/>
            <person name="Han Y."/>
            <person name="Dong L."/>
            <person name="Ji J."/>
            <person name="Chen P."/>
            <person name="Wu S."/>
            <person name="Liu J."/>
            <person name="Xiao Y."/>
            <person name="Bu D."/>
            <person name="Tan J."/>
            <person name="Yang L."/>
            <person name="Ye C."/>
            <person name="Zhang J."/>
            <person name="Xu J."/>
            <person name="Zhou Y."/>
            <person name="Yu Y."/>
            <person name="Zhang B."/>
            <person name="Zhuang S."/>
            <person name="Wei H."/>
            <person name="Liu B."/>
            <person name="Lei M."/>
            <person name="Yu H."/>
            <person name="Li Y."/>
            <person name="Xu H."/>
            <person name="Wei S."/>
            <person name="He X."/>
            <person name="Fang L."/>
            <person name="Zhang Z."/>
            <person name="Zhang Y."/>
            <person name="Huang X."/>
            <person name="Su Z."/>
            <person name="Tong W."/>
            <person name="Li J."/>
            <person name="Tong Z."/>
            <person name="Li S."/>
            <person name="Ye J."/>
            <person name="Wang L."/>
            <person name="Fang L."/>
            <person name="Lei T."/>
            <person name="Chen C.-S."/>
            <person name="Chen H.-C."/>
            <person name="Xu Z."/>
            <person name="Li H."/>
            <person name="Huang H."/>
            <person name="Zhang F."/>
            <person name="Xu H."/>
            <person name="Li N."/>
            <person name="Zhao C."/>
            <person name="Li S."/>
            <person name="Dong L."/>
            <person name="Huang Y."/>
            <person name="Li L."/>
            <person name="Xi Y."/>
            <person name="Qi Q."/>
            <person name="Li W."/>
            <person name="Zhang B."/>
            <person name="Hu W."/>
            <person name="Zhang Y."/>
            <person name="Tian X."/>
            <person name="Jiao Y."/>
            <person name="Liang X."/>
            <person name="Jin J."/>
            <person name="Gao L."/>
            <person name="Zheng W."/>
            <person name="Hao B."/>
            <person name="Liu S.-M."/>
            <person name="Wang W."/>
            <person name="Yuan L."/>
            <person name="Cao M."/>
            <person name="McDermott J."/>
            <person name="Samudrala R."/>
            <person name="Wang J."/>
            <person name="Wong G.K.-S."/>
            <person name="Yang H."/>
        </authorList>
    </citation>
    <scope>NUCLEOTIDE SEQUENCE [LARGE SCALE GENOMIC DNA]</scope>
    <source>
        <strain>cv. Nipponbare</strain>
    </source>
</reference>
<reference key="7">
    <citation type="journal article" date="2007" name="Plant Physiol.">
        <title>Genome-wide analysis of the core DNA replication machinery in the higher plants Arabidopsis and rice.</title>
        <authorList>
            <person name="Shultz R.W."/>
            <person name="Tatineni V.M."/>
            <person name="Hanley-Bowdoin L."/>
            <person name="Thompson W.F."/>
        </authorList>
    </citation>
    <scope>REVIEW ON THE CORE DNA REPLICATION MACHINERY</scope>
</reference>
<dbReference type="EMBL" id="AB100408">
    <property type="protein sequence ID" value="BAC56110.1"/>
    <property type="molecule type" value="mRNA"/>
</dbReference>
<dbReference type="EMBL" id="AC083943">
    <property type="protein sequence ID" value="AAM74272.1"/>
    <property type="status" value="ALT_SEQ"/>
    <property type="molecule type" value="Genomic_DNA"/>
</dbReference>
<dbReference type="EMBL" id="DP000086">
    <property type="protein sequence ID" value="ABB47555.2"/>
    <property type="status" value="ALT_SEQ"/>
    <property type="molecule type" value="Genomic_DNA"/>
</dbReference>
<dbReference type="EMBL" id="AP008216">
    <property type="protein sequence ID" value="BAF26464.1"/>
    <property type="molecule type" value="Genomic_DNA"/>
</dbReference>
<dbReference type="EMBL" id="AP014966">
    <property type="protein sequence ID" value="BAT10748.1"/>
    <property type="molecule type" value="Genomic_DNA"/>
</dbReference>
<dbReference type="EMBL" id="CM000147">
    <property type="protein sequence ID" value="EEE50922.1"/>
    <property type="status" value="ALT_SEQ"/>
    <property type="molecule type" value="Genomic_DNA"/>
</dbReference>
<dbReference type="RefSeq" id="XP_015613475.1">
    <property type="nucleotide sequence ID" value="XM_015757989.1"/>
</dbReference>
<dbReference type="SMR" id="Q0IY07"/>
<dbReference type="FunCoup" id="Q0IY07">
    <property type="interactions" value="1492"/>
</dbReference>
<dbReference type="STRING" id="39947.Q0IY07"/>
<dbReference type="PaxDb" id="39947-Q0IY07"/>
<dbReference type="EnsemblPlants" id="Os10t0402200-01">
    <property type="protein sequence ID" value="Os10t0402200-01"/>
    <property type="gene ID" value="Os10g0402200"/>
</dbReference>
<dbReference type="Gramene" id="Os10t0402200-01">
    <property type="protein sequence ID" value="Os10t0402200-01"/>
    <property type="gene ID" value="Os10g0402200"/>
</dbReference>
<dbReference type="KEGG" id="dosa:Os10g0402200"/>
<dbReference type="eggNOG" id="KOG2538">
    <property type="taxonomic scope" value="Eukaryota"/>
</dbReference>
<dbReference type="HOGENOM" id="CLU_010669_0_0_1"/>
<dbReference type="InParanoid" id="Q0IY07"/>
<dbReference type="OMA" id="YCLMEHY"/>
<dbReference type="OrthoDB" id="10265211at2759"/>
<dbReference type="PlantReactome" id="R-OSA-9640882">
    <property type="pathway name" value="Assembly of pre-replication complex"/>
</dbReference>
<dbReference type="PlantReactome" id="R-OSA-9645850">
    <property type="pathway name" value="Activation of pre-replication complex"/>
</dbReference>
<dbReference type="Proteomes" id="UP000000763">
    <property type="component" value="Chromosome 10"/>
</dbReference>
<dbReference type="Proteomes" id="UP000007752">
    <property type="component" value="Chromosome 10"/>
</dbReference>
<dbReference type="Proteomes" id="UP000059680">
    <property type="component" value="Chromosome 10"/>
</dbReference>
<dbReference type="GO" id="GO:0031261">
    <property type="term" value="C:DNA replication preinitiation complex"/>
    <property type="evidence" value="ECO:0000318"/>
    <property type="project" value="GO_Central"/>
</dbReference>
<dbReference type="GO" id="GO:0005664">
    <property type="term" value="C:nuclear origin of replication recognition complex"/>
    <property type="evidence" value="ECO:0000318"/>
    <property type="project" value="GO_Central"/>
</dbReference>
<dbReference type="GO" id="GO:0005656">
    <property type="term" value="C:nuclear pre-replicative complex"/>
    <property type="evidence" value="ECO:0000318"/>
    <property type="project" value="GO_Central"/>
</dbReference>
<dbReference type="GO" id="GO:0003688">
    <property type="term" value="F:DNA replication origin binding"/>
    <property type="evidence" value="ECO:0000318"/>
    <property type="project" value="GO_Central"/>
</dbReference>
<dbReference type="GO" id="GO:0006270">
    <property type="term" value="P:DNA replication initiation"/>
    <property type="evidence" value="ECO:0000318"/>
    <property type="project" value="GO_Central"/>
</dbReference>
<dbReference type="GO" id="GO:0048527">
    <property type="term" value="P:lateral root development"/>
    <property type="evidence" value="ECO:0000315"/>
    <property type="project" value="CACAO"/>
</dbReference>
<dbReference type="GO" id="GO:0009744">
    <property type="term" value="P:response to sucrose"/>
    <property type="evidence" value="ECO:0000314"/>
    <property type="project" value="UniProtKB"/>
</dbReference>
<dbReference type="CDD" id="cd20704">
    <property type="entry name" value="Orc3"/>
    <property type="match status" value="1"/>
</dbReference>
<dbReference type="InterPro" id="IPR020795">
    <property type="entry name" value="ORC3"/>
</dbReference>
<dbReference type="InterPro" id="IPR045667">
    <property type="entry name" value="ORC3_N"/>
</dbReference>
<dbReference type="InterPro" id="IPR040855">
    <property type="entry name" value="ORC_WH_C"/>
</dbReference>
<dbReference type="PANTHER" id="PTHR12748">
    <property type="entry name" value="ORIGIN RECOGNITION COMPLEX SUBUNIT 3"/>
    <property type="match status" value="1"/>
</dbReference>
<dbReference type="PANTHER" id="PTHR12748:SF0">
    <property type="entry name" value="ORIGIN RECOGNITION COMPLEX SUBUNIT 3"/>
    <property type="match status" value="1"/>
</dbReference>
<dbReference type="Pfam" id="PF07034">
    <property type="entry name" value="ORC3_N"/>
    <property type="match status" value="1"/>
</dbReference>
<dbReference type="Pfam" id="PF18137">
    <property type="entry name" value="ORC_WH_C"/>
    <property type="match status" value="1"/>
</dbReference>